<accession>P81040</accession>
<accession>B8J401</accession>
<accession>Q84I46</accession>
<protein>
    <recommendedName>
        <fullName>Split-Soret cytochrome c</fullName>
    </recommendedName>
</protein>
<organism>
    <name type="scientific">Desulfovibrio desulfuricans (strain ATCC 27774 / DSM 6949 / MB)</name>
    <dbReference type="NCBI Taxonomy" id="525146"/>
    <lineage>
        <taxon>Bacteria</taxon>
        <taxon>Pseudomonadati</taxon>
        <taxon>Thermodesulfobacteriota</taxon>
        <taxon>Desulfovibrionia</taxon>
        <taxon>Desulfovibrionales</taxon>
        <taxon>Desulfovibrionaceae</taxon>
        <taxon>Desulfovibrio</taxon>
    </lineage>
</organism>
<feature type="signal peptide" description="Tat-type signal" evidence="2 4 5">
    <location>
        <begin position="1"/>
        <end position="32"/>
    </location>
</feature>
<feature type="chain" id="PRO_0000108442" description="Split-Soret cytochrome c">
    <location>
        <begin position="33"/>
        <end position="279"/>
    </location>
</feature>
<feature type="binding site" evidence="6">
    <location>
        <position position="76"/>
    </location>
    <ligand>
        <name>[2Fe-2S] cluster</name>
        <dbReference type="ChEBI" id="CHEBI:190135"/>
    </ligand>
</feature>
<feature type="binding site" evidence="6">
    <location>
        <position position="118"/>
    </location>
    <ligand>
        <name>[2Fe-2S] cluster</name>
        <dbReference type="ChEBI" id="CHEBI:190135"/>
    </ligand>
</feature>
<feature type="binding site" evidence="6">
    <location>
        <position position="179"/>
    </location>
    <ligand>
        <name>[2Fe-2S] cluster</name>
        <dbReference type="ChEBI" id="CHEBI:190135"/>
    </ligand>
</feature>
<feature type="binding site" description="axial binding residue; in chain B" evidence="3 7">
    <location>
        <position position="180"/>
    </location>
    <ligand>
        <name>heme c</name>
        <dbReference type="ChEBI" id="CHEBI:61717"/>
        <label>2</label>
        <note>ligand shared between homodimeric partners</note>
    </ligand>
    <ligandPart>
        <name>Fe</name>
        <dbReference type="ChEBI" id="CHEBI:18248"/>
    </ligandPart>
</feature>
<feature type="binding site" evidence="6">
    <location>
        <position position="203"/>
    </location>
    <ligand>
        <name>[2Fe-2S] cluster</name>
        <dbReference type="ChEBI" id="CHEBI:190135"/>
    </ligand>
</feature>
<feature type="binding site" description="covalent; in chain A" evidence="3 7">
    <location>
        <position position="241"/>
    </location>
    <ligand>
        <name>heme c</name>
        <dbReference type="ChEBI" id="CHEBI:61717"/>
        <label>1</label>
        <note>ligand shared between homodimeric partners</note>
    </ligand>
</feature>
<feature type="binding site" description="covalent; in chain A" evidence="3 7">
    <location>
        <position position="244"/>
    </location>
    <ligand>
        <name>heme c</name>
        <dbReference type="ChEBI" id="CHEBI:61717"/>
        <label>1</label>
        <note>ligand shared between homodimeric partners</note>
    </ligand>
</feature>
<feature type="binding site" description="axial binding residue; in chain A" evidence="3 7">
    <location>
        <position position="245"/>
    </location>
    <ligand>
        <name>heme c</name>
        <dbReference type="ChEBI" id="CHEBI:61717"/>
        <label>1</label>
        <note>ligand shared between homodimeric partners</note>
    </ligand>
    <ligandPart>
        <name>Fe</name>
        <dbReference type="ChEBI" id="CHEBI:18248"/>
    </ligandPart>
</feature>
<feature type="binding site" description="covalent; in chain A" evidence="3 7">
    <location>
        <position position="261"/>
    </location>
    <ligand>
        <name>heme c</name>
        <dbReference type="ChEBI" id="CHEBI:61717"/>
        <label>2</label>
        <note>ligand shared between homodimeric partners</note>
    </ligand>
</feature>
<feature type="binding site" description="covalent; in chain A" evidence="3 7">
    <location>
        <position position="264"/>
    </location>
    <ligand>
        <name>heme c</name>
        <dbReference type="ChEBI" id="CHEBI:61717"/>
        <label>2</label>
        <note>ligand shared between homodimeric partners</note>
    </ligand>
</feature>
<feature type="binding site" description="axial binding residue; in chain A" evidence="3 7">
    <location>
        <position position="265"/>
    </location>
    <ligand>
        <name>heme c</name>
        <dbReference type="ChEBI" id="CHEBI:61717"/>
        <label>2</label>
        <note>ligand shared between homodimeric partners</note>
    </ligand>
    <ligandPart>
        <name>Fe</name>
        <dbReference type="ChEBI" id="CHEBI:18248"/>
    </ligandPart>
</feature>
<feature type="binding site" description="in chain B" evidence="3 7">
    <location>
        <position position="274"/>
    </location>
    <ligand>
        <name>heme c</name>
        <dbReference type="ChEBI" id="CHEBI:61717"/>
        <label>1</label>
        <note>ligand shared between homodimeric partners</note>
    </ligand>
</feature>
<feature type="binding site" description="axial binding residue; in chain B" evidence="3 7">
    <location>
        <position position="278"/>
    </location>
    <ligand>
        <name>heme c</name>
        <dbReference type="ChEBI" id="CHEBI:61717"/>
        <label>1</label>
        <note>ligand shared between homodimeric partners</note>
    </ligand>
    <ligandPart>
        <name>Fe</name>
        <dbReference type="ChEBI" id="CHEBI:18248"/>
    </ligandPart>
</feature>
<feature type="modified residue" description="Blocked amino end (Gly)">
    <location>
        <position position="33"/>
    </location>
</feature>
<feature type="sequence conflict" description="In Ref. 3; AA sequence and 4; AA sequence." evidence="6" ref="3 4">
    <original>Q</original>
    <variation>E</variation>
    <location>
        <position position="34"/>
    </location>
</feature>
<feature type="sequence conflict" description="In Ref. 3; AA sequence." evidence="6" ref="3">
    <original>C</original>
    <variation>Y</variation>
    <location>
        <position position="118"/>
    </location>
</feature>
<feature type="sequence conflict" description="In Ref. 3; AA sequence." evidence="6" ref="3">
    <original>C</original>
    <variation>A</variation>
    <location>
        <position position="203"/>
    </location>
</feature>
<feature type="helix" evidence="8">
    <location>
        <begin position="58"/>
        <end position="70"/>
    </location>
</feature>
<feature type="helix" evidence="8">
    <location>
        <begin position="71"/>
        <end position="73"/>
    </location>
</feature>
<feature type="helix" evidence="8">
    <location>
        <begin position="76"/>
        <end position="92"/>
    </location>
</feature>
<feature type="helix" evidence="8">
    <location>
        <begin position="96"/>
        <end position="98"/>
    </location>
</feature>
<feature type="helix" evidence="8">
    <location>
        <begin position="101"/>
        <end position="110"/>
    </location>
</feature>
<feature type="turn" evidence="8">
    <location>
        <begin position="111"/>
        <end position="113"/>
    </location>
</feature>
<feature type="helix" evidence="8">
    <location>
        <begin position="119"/>
        <end position="131"/>
    </location>
</feature>
<feature type="helix" evidence="8">
    <location>
        <begin position="134"/>
        <end position="150"/>
    </location>
</feature>
<feature type="helix" evidence="8">
    <location>
        <begin position="159"/>
        <end position="161"/>
    </location>
</feature>
<feature type="helix" evidence="8">
    <location>
        <begin position="179"/>
        <end position="190"/>
    </location>
</feature>
<feature type="helix" evidence="8">
    <location>
        <begin position="197"/>
        <end position="224"/>
    </location>
</feature>
<feature type="helix" evidence="8">
    <location>
        <begin position="225"/>
        <end position="227"/>
    </location>
</feature>
<feature type="helix" evidence="8">
    <location>
        <begin position="236"/>
        <end position="245"/>
    </location>
</feature>
<feature type="turn" evidence="8">
    <location>
        <begin position="262"/>
        <end position="264"/>
    </location>
</feature>
<feature type="strand" evidence="8">
    <location>
        <begin position="275"/>
        <end position="277"/>
    </location>
</feature>
<proteinExistence type="evidence at protein level"/>
<sequence>MNIGRRDLICGLGGLAVGGAMLGLGSVEARAAGQAQPASGRFDQVGGAFGWKPHKLDPKECAQVAYDGYWYKGFGCGFGAFYSIVGLMGEKYGAPYNQFPFAMLEANKGGISDWGTICGALYGAAATFSLFWGRKEVHPMVNELFRWYEVTKLPIFNPGDAAQGVKGDLPMSASDSVLCHISVSKWCYENKIEATSKQRSERCGRLTADAAFKAAEIINTKIDQGKDFKSTFPMQASVSSCGECHMTKGNDANWAKGIMDCTPCHSGTAATQNKFVNHP</sequence>
<reference key="1">
    <citation type="submission" date="2002-01" db="EMBL/GenBank/DDBJ databases">
        <title>Desulfovibrio desulfuricans split soret cytochrome c gene.</title>
        <authorList>
            <person name="Abreu I.A."/>
            <person name="Saraiva L.M."/>
        </authorList>
    </citation>
    <scope>NUCLEOTIDE SEQUENCE [GENOMIC DNA]</scope>
    <scope>IRON-SULFUR CLUSTER</scope>
</reference>
<reference key="2">
    <citation type="submission" date="2009-01" db="EMBL/GenBank/DDBJ databases">
        <title>Complete sequence of Desulfovibrio desulfuricans subsp. desulfuricans str. ATCC 27774.</title>
        <authorList>
            <consortium name="US DOE Joint Genome Institute"/>
            <person name="Lucas S."/>
            <person name="Copeland A."/>
            <person name="Lapidus A."/>
            <person name="Glavina del Rio T."/>
            <person name="Tice H."/>
            <person name="Bruce D."/>
            <person name="Goodwin L."/>
            <person name="Pitluck S."/>
            <person name="Sims D."/>
            <person name="Lu M."/>
            <person name="Kiss H."/>
            <person name="Meineke L."/>
            <person name="Brettin T."/>
            <person name="Detter J.C."/>
            <person name="Han C."/>
            <person name="Larimer F."/>
            <person name="Land M."/>
            <person name="Hauser L."/>
            <person name="Kyrpides N."/>
            <person name="Ovchinnikova G."/>
            <person name="Hazen T.C."/>
        </authorList>
    </citation>
    <scope>NUCLEOTIDE SEQUENCE [LARGE SCALE GENOMIC DNA]</scope>
    <source>
        <strain>ATCC 27774 / DSM 6949 / MB</strain>
    </source>
</reference>
<reference key="3">
    <citation type="journal article" date="1997" name="Eur. J. Biochem.">
        <title>The primary structure of the split-Soret cytochrome c from Desulfovibrio desulfuricans ATCC 27774 reveals an unusual type of diheme cytochrome c.</title>
        <authorList>
            <person name="Devreese B."/>
            <person name="Costa C."/>
            <person name="Demol H."/>
            <person name="Papaefthymiou V."/>
            <person name="Moura I."/>
            <person name="Moura J.J.G."/>
            <person name="van Beeumen J."/>
        </authorList>
    </citation>
    <scope>PROTEIN SEQUENCE OF 33-279</scope>
    <scope>BLOCKAGE OF N-TERMINUS</scope>
</reference>
<reference key="4">
    <citation type="journal article" date="1991" name="Biochim. Biophys. Acta">
        <title>Structural and functional approach toward a classification of the complex cytochrome c system found in sulfate-reducing bacteria.</title>
        <authorList>
            <person name="Moura J.J.G."/>
            <person name="Costa C."/>
            <person name="Liu M.Y."/>
            <person name="Moura I."/>
            <person name="Legall J."/>
        </authorList>
    </citation>
    <scope>PROTEIN SEQUENCE OF 33-54</scope>
</reference>
<reference key="5">
    <citation type="journal article" date="1997" name="J. Biol. Inorg. Chem.">
        <title>A preliminary analysis of the three-dimensional structure of dimeric di-haem split-Soret cytochrome c from Desulfovibrio desulfuricans ATCC 27774 at 2.5-A resolution using the MAD phasing method: a novel cytochrome fold with a stacked-haem arrangement.</title>
        <authorList>
            <person name="Matias P.M."/>
            <person name="Morais J."/>
            <person name="Coelho A.V."/>
            <person name="Meijers R."/>
            <person name="Gonzalez A."/>
            <person name="Thompson A.W."/>
            <person name="Sieker L."/>
            <person name="Legall J."/>
            <person name="Carrondo M.A."/>
        </authorList>
    </citation>
    <scope>X-RAY CRYSTALLOGRAPHY (2.5 ANGSTROMS) OF 33-279</scope>
</reference>
<reference evidence="7" key="6">
    <citation type="journal article" date="2003" name="J. Biol. Inorg. Chem.">
        <title>A novel iron centre in the split-Soret cytochrome c from Desulfovibrio desulfuricans ATCC 27774.</title>
        <authorList>
            <person name="Abreu I.A."/>
            <person name="Lourenco A.I."/>
            <person name="Xavier A.V."/>
            <person name="LeGall J."/>
            <person name="Coelho A.V."/>
            <person name="Matias P.M."/>
            <person name="Pinto D.M."/>
            <person name="Armenia Carrondo M."/>
            <person name="Teixeira M."/>
            <person name="Saraiva L.M."/>
        </authorList>
    </citation>
    <scope>X-RAY CRYSTALLOGRAPHY (2.5 ANGSTROMS) OF 33-279 IN COMPLEX WITH HEMES C</scope>
    <scope>COFACTOR</scope>
</reference>
<gene>
    <name type="ordered locus">Ddes_2150</name>
</gene>
<name>CYCX_DESDA</name>
<dbReference type="EMBL" id="AF465622">
    <property type="protein sequence ID" value="AAO20874.1"/>
    <property type="molecule type" value="Genomic_DNA"/>
</dbReference>
<dbReference type="EMBL" id="CP001358">
    <property type="protein sequence ID" value="ACL50046.1"/>
    <property type="molecule type" value="Genomic_DNA"/>
</dbReference>
<dbReference type="PDB" id="1H21">
    <property type="method" value="X-ray"/>
    <property type="resolution" value="2.50 A"/>
    <property type="chains" value="A/B/C/D=33-279"/>
</dbReference>
<dbReference type="PDBsum" id="1H21"/>
<dbReference type="SMR" id="P81040"/>
<dbReference type="STRING" id="525146.Ddes_2150"/>
<dbReference type="DrugBank" id="DB03317">
    <property type="generic name" value="Ferroheme C"/>
</dbReference>
<dbReference type="KEGG" id="dds:Ddes_2150"/>
<dbReference type="eggNOG" id="ENOG50320QR">
    <property type="taxonomic scope" value="Bacteria"/>
</dbReference>
<dbReference type="HOGENOM" id="CLU_063015_0_0_7"/>
<dbReference type="EvolutionaryTrace" id="P81040"/>
<dbReference type="GO" id="GO:0051537">
    <property type="term" value="F:2 iron, 2 sulfur cluster binding"/>
    <property type="evidence" value="ECO:0007669"/>
    <property type="project" value="UniProtKB-KW"/>
</dbReference>
<dbReference type="GO" id="GO:0046872">
    <property type="term" value="F:metal ion binding"/>
    <property type="evidence" value="ECO:0007669"/>
    <property type="project" value="UniProtKB-KW"/>
</dbReference>
<dbReference type="GO" id="GO:0009061">
    <property type="term" value="P:anaerobic respiration"/>
    <property type="evidence" value="ECO:0007669"/>
    <property type="project" value="UniProtKB-KW"/>
</dbReference>
<dbReference type="InterPro" id="IPR010181">
    <property type="entry name" value="CGCAxxGCC_motif"/>
</dbReference>
<dbReference type="InterPro" id="IPR036280">
    <property type="entry name" value="Multihaem_cyt_sf"/>
</dbReference>
<dbReference type="InterPro" id="IPR006311">
    <property type="entry name" value="TAT_signal"/>
</dbReference>
<dbReference type="NCBIfam" id="NF047622">
    <property type="entry name" value="SptSoretCytCDesul"/>
    <property type="match status" value="1"/>
</dbReference>
<dbReference type="Pfam" id="PF09719">
    <property type="entry name" value="C_GCAxxG_C_C"/>
    <property type="match status" value="1"/>
</dbReference>
<dbReference type="SUPFAM" id="SSF48695">
    <property type="entry name" value="Multiheme cytochromes"/>
    <property type="match status" value="1"/>
</dbReference>
<dbReference type="PROSITE" id="PS51318">
    <property type="entry name" value="TAT"/>
    <property type="match status" value="1"/>
</dbReference>
<keyword id="KW-0001">2Fe-2S</keyword>
<keyword id="KW-0002">3D-structure</keyword>
<keyword id="KW-0903">Direct protein sequencing</keyword>
<keyword id="KW-0249">Electron transport</keyword>
<keyword id="KW-0349">Heme</keyword>
<keyword id="KW-0408">Iron</keyword>
<keyword id="KW-0411">Iron-sulfur</keyword>
<keyword id="KW-0479">Metal-binding</keyword>
<keyword id="KW-0732">Signal</keyword>
<keyword id="KW-0763">Sulfate respiration</keyword>
<keyword id="KW-0813">Transport</keyword>
<evidence type="ECO:0000250" key="1"/>
<evidence type="ECO:0000255" key="2">
    <source>
        <dbReference type="PROSITE-ProRule" id="PRU00648"/>
    </source>
</evidence>
<evidence type="ECO:0000269" key="3">
    <source>
    </source>
</evidence>
<evidence type="ECO:0000269" key="4">
    <source>
    </source>
</evidence>
<evidence type="ECO:0000269" key="5">
    <source>
    </source>
</evidence>
<evidence type="ECO:0000305" key="6"/>
<evidence type="ECO:0007744" key="7">
    <source>
        <dbReference type="PDB" id="1H21"/>
    </source>
</evidence>
<evidence type="ECO:0007829" key="8">
    <source>
        <dbReference type="PDB" id="1H21"/>
    </source>
</evidence>
<comment type="function">
    <text>Diheme cytochrome c which may be involved in sulfate reduction.</text>
</comment>
<comment type="cofactor">
    <cofactor evidence="3">
        <name>heme c</name>
        <dbReference type="ChEBI" id="CHEBI:61717"/>
    </cofactor>
    <text evidence="3">Binds 2 heme c groups per subunit. Each heme is also bound by the other subunit.</text>
</comment>
<comment type="cofactor">
    <cofactor>
        <name>[2Fe-2S] cluster</name>
        <dbReference type="ChEBI" id="CHEBI:190135"/>
    </cofactor>
    <text>Binds 1 iron-sulfur cluster per subunit, probably [2Fe-2S] cluster.</text>
</comment>
<comment type="biophysicochemical properties">
    <redoxPotential>
        <text>E(0) are -168 mV and -330 mV.</text>
    </redoxPotential>
</comment>
<comment type="subunit">
    <text>Homodimer; linked through the 4 hemes that are shared between the subunits.</text>
</comment>
<comment type="PTM">
    <text>The N-terminal Gly is blocked by a labile group with a mass of 85 Da.</text>
</comment>
<comment type="PTM">
    <text evidence="1">Predicted to be exported by the Tat system.</text>
</comment>